<name>PSBL_CAPAN</name>
<comment type="function">
    <text evidence="1">One of the components of the core complex of photosystem II (PSII). PSII is a light-driven water:plastoquinone oxidoreductase that uses light energy to abstract electrons from H(2)O, generating O(2) and a proton gradient subsequently used for ATP formation. It consists of a core antenna complex that captures photons, and an electron transfer chain that converts photonic excitation into a charge separation. This subunit is found at the monomer-monomer interface and is required for correct PSII assembly and/or dimerization.</text>
</comment>
<comment type="subunit">
    <text evidence="1">PSII is composed of 1 copy each of membrane proteins PsbA, PsbB, PsbC, PsbD, PsbE, PsbF, PsbH, PsbI, PsbJ, PsbK, PsbL, PsbM, PsbT, PsbX, PsbY, PsbZ, Psb30/Ycf12, at least 3 peripheral proteins of the oxygen-evolving complex and a large number of cofactors. It forms dimeric complexes.</text>
</comment>
<comment type="subcellular location">
    <subcellularLocation>
        <location evidence="1">Plastid</location>
        <location evidence="1">Chloroplast thylakoid membrane</location>
        <topology evidence="1">Single-pass membrane protein</topology>
    </subcellularLocation>
</comment>
<comment type="RNA editing">
    <location>
        <position position="1" evidence="2"/>
    </location>
    <text>The initiator methionine is created by RNA editing. Editing occurs in both leaves and in non-photosynthetic fruit.</text>
</comment>
<comment type="similarity">
    <text evidence="1">Belongs to the PsbL family.</text>
</comment>
<geneLocation type="chloroplast"/>
<evidence type="ECO:0000255" key="1">
    <source>
        <dbReference type="HAMAP-Rule" id="MF_01317"/>
    </source>
</evidence>
<evidence type="ECO:0000269" key="2">
    <source>
    </source>
</evidence>
<accession>P60142</accession>
<accession>O47030</accession>
<accession>P12166</accession>
<accession>P12167</accession>
<accession>Q34007</accession>
<feature type="chain" id="PRO_0000219691" description="Photosystem II reaction center protein L">
    <location>
        <begin position="1"/>
        <end position="38"/>
    </location>
</feature>
<feature type="transmembrane region" description="Helical" evidence="1">
    <location>
        <begin position="17"/>
        <end position="37"/>
    </location>
</feature>
<organism>
    <name type="scientific">Capsicum annuum</name>
    <name type="common">Capsicum pepper</name>
    <dbReference type="NCBI Taxonomy" id="4072"/>
    <lineage>
        <taxon>Eukaryota</taxon>
        <taxon>Viridiplantae</taxon>
        <taxon>Streptophyta</taxon>
        <taxon>Embryophyta</taxon>
        <taxon>Tracheophyta</taxon>
        <taxon>Spermatophyta</taxon>
        <taxon>Magnoliopsida</taxon>
        <taxon>eudicotyledons</taxon>
        <taxon>Gunneridae</taxon>
        <taxon>Pentapetalae</taxon>
        <taxon>asterids</taxon>
        <taxon>lamiids</taxon>
        <taxon>Solanales</taxon>
        <taxon>Solanaceae</taxon>
        <taxon>Solanoideae</taxon>
        <taxon>Capsiceae</taxon>
        <taxon>Capsicum</taxon>
    </lineage>
</organism>
<sequence length="38" mass="4497">MTQSNPNEQNVELNRTSLYWGLLLIFVLAVLFSNYFFN</sequence>
<protein>
    <recommendedName>
        <fullName evidence="1">Photosystem II reaction center protein L</fullName>
        <shortName evidence="1">PSII-L</shortName>
    </recommendedName>
</protein>
<reference key="1">
    <citation type="journal article" date="1992" name="Plant Mol. Biol.">
        <title>The psbL gene from bell pepper (Capsicum annuum): plastid RNA editing also occurs in non-photosynthetic chromoplasts.</title>
        <authorList>
            <person name="Kuntz M."/>
            <person name="Camara B."/>
            <person name="Weil J.-H."/>
            <person name="Schantz R."/>
        </authorList>
    </citation>
    <scope>NUCLEOTIDE SEQUENCE [GENOMIC DNA]</scope>
    <scope>RNA EDITING OF INITIATOR CODON</scope>
    <source>
        <strain>cv. Lamuyo</strain>
        <tissue>Fruit</tissue>
        <tissue>Leaf</tissue>
    </source>
</reference>
<dbReference type="EMBL" id="X65570">
    <property type="protein sequence ID" value="CAA46540.1"/>
    <property type="status" value="ALT_SEQ"/>
    <property type="molecule type" value="Genomic_DNA"/>
</dbReference>
<dbReference type="PIR" id="S28056">
    <property type="entry name" value="S28056"/>
</dbReference>
<dbReference type="RefSeq" id="YP_006666045.1">
    <property type="nucleotide sequence ID" value="NC_018552.1"/>
</dbReference>
<dbReference type="SMR" id="P60142"/>
<dbReference type="GeneID" id="13540233"/>
<dbReference type="KEGG" id="cann:13540233"/>
<dbReference type="OrthoDB" id="99at2759"/>
<dbReference type="GO" id="GO:0009535">
    <property type="term" value="C:chloroplast thylakoid membrane"/>
    <property type="evidence" value="ECO:0007669"/>
    <property type="project" value="UniProtKB-SubCell"/>
</dbReference>
<dbReference type="GO" id="GO:0009539">
    <property type="term" value="C:photosystem II reaction center"/>
    <property type="evidence" value="ECO:0007669"/>
    <property type="project" value="InterPro"/>
</dbReference>
<dbReference type="GO" id="GO:0015979">
    <property type="term" value="P:photosynthesis"/>
    <property type="evidence" value="ECO:0007669"/>
    <property type="project" value="UniProtKB-UniRule"/>
</dbReference>
<dbReference type="HAMAP" id="MF_01317">
    <property type="entry name" value="PSII_PsbL"/>
    <property type="match status" value="1"/>
</dbReference>
<dbReference type="InterPro" id="IPR003372">
    <property type="entry name" value="PSII_PsbL"/>
</dbReference>
<dbReference type="InterPro" id="IPR037266">
    <property type="entry name" value="PSII_PsbL_sf"/>
</dbReference>
<dbReference type="NCBIfam" id="NF001972">
    <property type="entry name" value="PRK00753.1"/>
    <property type="match status" value="1"/>
</dbReference>
<dbReference type="Pfam" id="PF02419">
    <property type="entry name" value="PsbL"/>
    <property type="match status" value="1"/>
</dbReference>
<dbReference type="SUPFAM" id="SSF161017">
    <property type="entry name" value="Photosystem II reaction center protein L, PsbL"/>
    <property type="match status" value="1"/>
</dbReference>
<proteinExistence type="evidence at transcript level"/>
<keyword id="KW-0150">Chloroplast</keyword>
<keyword id="KW-0472">Membrane</keyword>
<keyword id="KW-0602">Photosynthesis</keyword>
<keyword id="KW-0604">Photosystem II</keyword>
<keyword id="KW-0934">Plastid</keyword>
<keyword id="KW-0674">Reaction center</keyword>
<keyword id="KW-0691">RNA editing</keyword>
<keyword id="KW-0793">Thylakoid</keyword>
<keyword id="KW-0812">Transmembrane</keyword>
<keyword id="KW-1133">Transmembrane helix</keyword>
<gene>
    <name evidence="1" type="primary">psbL</name>
</gene>